<accession>Q9JXA3</accession>
<proteinExistence type="inferred from homology"/>
<organism>
    <name type="scientific">Neisseria meningitidis serogroup B (strain ATCC BAA-335 / MC58)</name>
    <dbReference type="NCBI Taxonomy" id="122586"/>
    <lineage>
        <taxon>Bacteria</taxon>
        <taxon>Pseudomonadati</taxon>
        <taxon>Pseudomonadota</taxon>
        <taxon>Betaproteobacteria</taxon>
        <taxon>Neisseriales</taxon>
        <taxon>Neisseriaceae</taxon>
        <taxon>Neisseria</taxon>
    </lineage>
</organism>
<name>PUR2_NEIMB</name>
<keyword id="KW-0067">ATP-binding</keyword>
<keyword id="KW-0436">Ligase</keyword>
<keyword id="KW-0460">Magnesium</keyword>
<keyword id="KW-0464">Manganese</keyword>
<keyword id="KW-0479">Metal-binding</keyword>
<keyword id="KW-0547">Nucleotide-binding</keyword>
<keyword id="KW-0658">Purine biosynthesis</keyword>
<keyword id="KW-1185">Reference proteome</keyword>
<evidence type="ECO:0000250" key="1"/>
<evidence type="ECO:0000255" key="2">
    <source>
        <dbReference type="HAMAP-Rule" id="MF_00138"/>
    </source>
</evidence>
<protein>
    <recommendedName>
        <fullName evidence="2">Phosphoribosylamine--glycine ligase</fullName>
        <ecNumber evidence="2">6.3.4.13</ecNumber>
    </recommendedName>
    <alternativeName>
        <fullName evidence="2">GARS</fullName>
    </alternativeName>
    <alternativeName>
        <fullName evidence="2">Glycinamide ribonucleotide synthetase</fullName>
    </alternativeName>
    <alternativeName>
        <fullName evidence="2">Phosphoribosylglycinamide synthetase</fullName>
    </alternativeName>
</protein>
<gene>
    <name evidence="2" type="primary">purD</name>
    <name type="ordered locus">NMB2151</name>
</gene>
<feature type="chain" id="PRO_0000151467" description="Phosphoribosylamine--glycine ligase">
    <location>
        <begin position="1"/>
        <end position="423"/>
    </location>
</feature>
<feature type="domain" description="ATP-grasp" evidence="2">
    <location>
        <begin position="107"/>
        <end position="314"/>
    </location>
</feature>
<feature type="binding site" evidence="2">
    <location>
        <begin position="133"/>
        <end position="194"/>
    </location>
    <ligand>
        <name>ATP</name>
        <dbReference type="ChEBI" id="CHEBI:30616"/>
    </ligand>
</feature>
<feature type="binding site" evidence="2">
    <location>
        <position position="284"/>
    </location>
    <ligand>
        <name>Mg(2+)</name>
        <dbReference type="ChEBI" id="CHEBI:18420"/>
    </ligand>
</feature>
<feature type="binding site" evidence="2">
    <location>
        <position position="286"/>
    </location>
    <ligand>
        <name>Mg(2+)</name>
        <dbReference type="ChEBI" id="CHEBI:18420"/>
    </ligand>
</feature>
<comment type="catalytic activity">
    <reaction evidence="2">
        <text>5-phospho-beta-D-ribosylamine + glycine + ATP = N(1)-(5-phospho-beta-D-ribosyl)glycinamide + ADP + phosphate + H(+)</text>
        <dbReference type="Rhea" id="RHEA:17453"/>
        <dbReference type="ChEBI" id="CHEBI:15378"/>
        <dbReference type="ChEBI" id="CHEBI:30616"/>
        <dbReference type="ChEBI" id="CHEBI:43474"/>
        <dbReference type="ChEBI" id="CHEBI:57305"/>
        <dbReference type="ChEBI" id="CHEBI:58681"/>
        <dbReference type="ChEBI" id="CHEBI:143788"/>
        <dbReference type="ChEBI" id="CHEBI:456216"/>
        <dbReference type="EC" id="6.3.4.13"/>
    </reaction>
</comment>
<comment type="cofactor">
    <cofactor evidence="1">
        <name>Mg(2+)</name>
        <dbReference type="ChEBI" id="CHEBI:18420"/>
    </cofactor>
    <cofactor evidence="1">
        <name>Mn(2+)</name>
        <dbReference type="ChEBI" id="CHEBI:29035"/>
    </cofactor>
    <text evidence="1">Binds 1 Mg(2+) or Mn(2+) ion per subunit.</text>
</comment>
<comment type="pathway">
    <text evidence="2">Purine metabolism; IMP biosynthesis via de novo pathway; N(1)-(5-phospho-D-ribosyl)glycinamide from 5-phospho-alpha-D-ribose 1-diphosphate: step 2/2.</text>
</comment>
<comment type="similarity">
    <text evidence="2">Belongs to the GARS family.</text>
</comment>
<dbReference type="EC" id="6.3.4.13" evidence="2"/>
<dbReference type="EMBL" id="AE002098">
    <property type="protein sequence ID" value="AAF42459.1"/>
    <property type="molecule type" value="Genomic_DNA"/>
</dbReference>
<dbReference type="PIR" id="E81000">
    <property type="entry name" value="E81000"/>
</dbReference>
<dbReference type="RefSeq" id="NP_275136.1">
    <property type="nucleotide sequence ID" value="NC_003112.2"/>
</dbReference>
<dbReference type="RefSeq" id="WP_002225741.1">
    <property type="nucleotide sequence ID" value="NC_003112.2"/>
</dbReference>
<dbReference type="SMR" id="Q9JXA3"/>
<dbReference type="FunCoup" id="Q9JXA3">
    <property type="interactions" value="349"/>
</dbReference>
<dbReference type="STRING" id="122586.NMB2151"/>
<dbReference type="PaxDb" id="122586-NMB2151"/>
<dbReference type="KEGG" id="nme:NMB2151"/>
<dbReference type="PATRIC" id="fig|122586.8.peg.2745"/>
<dbReference type="HOGENOM" id="CLU_027420_3_1_4"/>
<dbReference type="InParanoid" id="Q9JXA3"/>
<dbReference type="OrthoDB" id="9807240at2"/>
<dbReference type="UniPathway" id="UPA00074">
    <property type="reaction ID" value="UER00125"/>
</dbReference>
<dbReference type="Proteomes" id="UP000000425">
    <property type="component" value="Chromosome"/>
</dbReference>
<dbReference type="GO" id="GO:0005524">
    <property type="term" value="F:ATP binding"/>
    <property type="evidence" value="ECO:0007669"/>
    <property type="project" value="UniProtKB-KW"/>
</dbReference>
<dbReference type="GO" id="GO:0046872">
    <property type="term" value="F:metal ion binding"/>
    <property type="evidence" value="ECO:0007669"/>
    <property type="project" value="UniProtKB-KW"/>
</dbReference>
<dbReference type="GO" id="GO:0004637">
    <property type="term" value="F:phosphoribosylamine-glycine ligase activity"/>
    <property type="evidence" value="ECO:0007669"/>
    <property type="project" value="UniProtKB-UniRule"/>
</dbReference>
<dbReference type="GO" id="GO:0006189">
    <property type="term" value="P:'de novo' IMP biosynthetic process"/>
    <property type="evidence" value="ECO:0007669"/>
    <property type="project" value="UniProtKB-UniRule"/>
</dbReference>
<dbReference type="GO" id="GO:0009113">
    <property type="term" value="P:purine nucleobase biosynthetic process"/>
    <property type="evidence" value="ECO:0007669"/>
    <property type="project" value="InterPro"/>
</dbReference>
<dbReference type="FunFam" id="3.30.470.20:FF:000031">
    <property type="entry name" value="Phosphoribosylamine--glycine ligase"/>
    <property type="match status" value="1"/>
</dbReference>
<dbReference type="FunFam" id="3.40.50.20:FF:000006">
    <property type="entry name" value="Phosphoribosylamine--glycine ligase, chloroplastic"/>
    <property type="match status" value="1"/>
</dbReference>
<dbReference type="FunFam" id="3.30.1490.20:FF:000006">
    <property type="entry name" value="phosphoribosylamine--glycine ligase, chloroplastic-like"/>
    <property type="match status" value="1"/>
</dbReference>
<dbReference type="FunFam" id="3.90.600.10:FF:000001">
    <property type="entry name" value="Trifunctional purine biosynthetic protein adenosine-3"/>
    <property type="match status" value="1"/>
</dbReference>
<dbReference type="Gene3D" id="3.40.50.20">
    <property type="match status" value="1"/>
</dbReference>
<dbReference type="Gene3D" id="3.30.1490.20">
    <property type="entry name" value="ATP-grasp fold, A domain"/>
    <property type="match status" value="1"/>
</dbReference>
<dbReference type="Gene3D" id="3.30.470.20">
    <property type="entry name" value="ATP-grasp fold, B domain"/>
    <property type="match status" value="1"/>
</dbReference>
<dbReference type="Gene3D" id="3.90.600.10">
    <property type="entry name" value="Phosphoribosylglycinamide synthetase, C-terminal domain"/>
    <property type="match status" value="1"/>
</dbReference>
<dbReference type="HAMAP" id="MF_00138">
    <property type="entry name" value="GARS"/>
    <property type="match status" value="1"/>
</dbReference>
<dbReference type="InterPro" id="IPR011761">
    <property type="entry name" value="ATP-grasp"/>
</dbReference>
<dbReference type="InterPro" id="IPR013815">
    <property type="entry name" value="ATP_grasp_subdomain_1"/>
</dbReference>
<dbReference type="InterPro" id="IPR016185">
    <property type="entry name" value="PreATP-grasp_dom_sf"/>
</dbReference>
<dbReference type="InterPro" id="IPR020561">
    <property type="entry name" value="PRibGlycinamid_synth_ATP-grasp"/>
</dbReference>
<dbReference type="InterPro" id="IPR000115">
    <property type="entry name" value="PRibGlycinamide_synth"/>
</dbReference>
<dbReference type="InterPro" id="IPR020560">
    <property type="entry name" value="PRibGlycinamide_synth_C-dom"/>
</dbReference>
<dbReference type="InterPro" id="IPR037123">
    <property type="entry name" value="PRibGlycinamide_synth_C_sf"/>
</dbReference>
<dbReference type="InterPro" id="IPR020559">
    <property type="entry name" value="PRibGlycinamide_synth_CS"/>
</dbReference>
<dbReference type="InterPro" id="IPR020562">
    <property type="entry name" value="PRibGlycinamide_synth_N"/>
</dbReference>
<dbReference type="InterPro" id="IPR011054">
    <property type="entry name" value="Rudment_hybrid_motif"/>
</dbReference>
<dbReference type="NCBIfam" id="TIGR00877">
    <property type="entry name" value="purD"/>
    <property type="match status" value="1"/>
</dbReference>
<dbReference type="PANTHER" id="PTHR43472">
    <property type="entry name" value="PHOSPHORIBOSYLAMINE--GLYCINE LIGASE"/>
    <property type="match status" value="1"/>
</dbReference>
<dbReference type="PANTHER" id="PTHR43472:SF1">
    <property type="entry name" value="PHOSPHORIBOSYLAMINE--GLYCINE LIGASE, CHLOROPLASTIC"/>
    <property type="match status" value="1"/>
</dbReference>
<dbReference type="Pfam" id="PF01071">
    <property type="entry name" value="GARS_A"/>
    <property type="match status" value="1"/>
</dbReference>
<dbReference type="Pfam" id="PF02843">
    <property type="entry name" value="GARS_C"/>
    <property type="match status" value="1"/>
</dbReference>
<dbReference type="Pfam" id="PF02844">
    <property type="entry name" value="GARS_N"/>
    <property type="match status" value="1"/>
</dbReference>
<dbReference type="SMART" id="SM01209">
    <property type="entry name" value="GARS_A"/>
    <property type="match status" value="1"/>
</dbReference>
<dbReference type="SMART" id="SM01210">
    <property type="entry name" value="GARS_C"/>
    <property type="match status" value="1"/>
</dbReference>
<dbReference type="SUPFAM" id="SSF56059">
    <property type="entry name" value="Glutathione synthetase ATP-binding domain-like"/>
    <property type="match status" value="1"/>
</dbReference>
<dbReference type="SUPFAM" id="SSF52440">
    <property type="entry name" value="PreATP-grasp domain"/>
    <property type="match status" value="1"/>
</dbReference>
<dbReference type="SUPFAM" id="SSF51246">
    <property type="entry name" value="Rudiment single hybrid motif"/>
    <property type="match status" value="1"/>
</dbReference>
<dbReference type="PROSITE" id="PS50975">
    <property type="entry name" value="ATP_GRASP"/>
    <property type="match status" value="1"/>
</dbReference>
<dbReference type="PROSITE" id="PS00184">
    <property type="entry name" value="GARS"/>
    <property type="match status" value="1"/>
</dbReference>
<reference key="1">
    <citation type="journal article" date="2000" name="Science">
        <title>Complete genome sequence of Neisseria meningitidis serogroup B strain MC58.</title>
        <authorList>
            <person name="Tettelin H."/>
            <person name="Saunders N.J."/>
            <person name="Heidelberg J.F."/>
            <person name="Jeffries A.C."/>
            <person name="Nelson K.E."/>
            <person name="Eisen J.A."/>
            <person name="Ketchum K.A."/>
            <person name="Hood D.W."/>
            <person name="Peden J.F."/>
            <person name="Dodson R.J."/>
            <person name="Nelson W.C."/>
            <person name="Gwinn M.L."/>
            <person name="DeBoy R.T."/>
            <person name="Peterson J.D."/>
            <person name="Hickey E.K."/>
            <person name="Haft D.H."/>
            <person name="Salzberg S.L."/>
            <person name="White O."/>
            <person name="Fleischmann R.D."/>
            <person name="Dougherty B.A."/>
            <person name="Mason T.M."/>
            <person name="Ciecko A."/>
            <person name="Parksey D.S."/>
            <person name="Blair E."/>
            <person name="Cittone H."/>
            <person name="Clark E.B."/>
            <person name="Cotton M.D."/>
            <person name="Utterback T.R."/>
            <person name="Khouri H.M."/>
            <person name="Qin H."/>
            <person name="Vamathevan J.J."/>
            <person name="Gill J."/>
            <person name="Scarlato V."/>
            <person name="Masignani V."/>
            <person name="Pizza M."/>
            <person name="Grandi G."/>
            <person name="Sun L."/>
            <person name="Smith H.O."/>
            <person name="Fraser C.M."/>
            <person name="Moxon E.R."/>
            <person name="Rappuoli R."/>
            <person name="Venter J.C."/>
        </authorList>
    </citation>
    <scope>NUCLEOTIDE SEQUENCE [LARGE SCALE GENOMIC DNA]</scope>
    <source>
        <strain>ATCC BAA-335 / MC58</strain>
    </source>
</reference>
<sequence>MKLLVIGNGGREHALAWKLAQSPKVETVFVAPGNAGTAIEPKLQNIDLTAHQDLIEFCRKENIVFTVVGPEAPLAAGIVDDFRAAGLKIFGPTQYAAQLESSKDFAKAFMAKYNIPTAQYQTFENADAAHDYVNQKGAPIVIKADGLAAGKGVIVAMTLDEAHAAIDDMLLDNKMGNAGARVVIEDFLQGEEASFIVMVDGNNVLPMATSQDHKRLLDGDKGLNTGGMGAYSPAPVVTPVVYERAMNEIILPTVAGMKAEGHEFTGFLYAGLMIDQSGAPYTIEFNCRFGDPETQPIMSRLNSDLSDLVEAAIDGKLDSVTAEWSPQTAVGVVLAAQNYPETPKKGDIISGLDAANQIGKVFHAGTTANEKGDVLTNGGRVLCVVGLGDNVAQAKAKAYGALEKISFDGMQYRKDIADKAINR</sequence>